<comment type="function">
    <text evidence="1">May play the central regulatory role in sporulation. It may be an element of the effector pathway responsible for the activation of sporulation genes in response to nutritional stress. Spo0A may act in concert with Spo0H (a sigma factor) to control the expression of some genes that are critical to the sporulation process. Repressor of abrB, activator of the spoIIa operon. Binds the DNA sequence 5'-TGNCGAA-3' (0A box) (By similarity).</text>
</comment>
<comment type="cofactor">
    <cofactor evidence="1">
        <name>Ca(2+)</name>
        <dbReference type="ChEBI" id="CHEBI:29108"/>
    </cofactor>
    <text evidence="1">Binds 1 Ca(2+) ion per subunit.</text>
</comment>
<comment type="subcellular location">
    <subcellularLocation>
        <location evidence="4">Cytoplasm</location>
    </subcellularLocation>
</comment>
<comment type="PTM">
    <text evidence="1">Phosphorylated by KinA and KinB.</text>
</comment>
<feature type="chain" id="PRO_0000081230" description="Stage 0 sporulation protein A">
    <location>
        <begin position="1"/>
        <end position="212" status="greater than"/>
    </location>
</feature>
<feature type="domain" description="Response regulatory" evidence="3">
    <location>
        <begin position="5"/>
        <end position="123"/>
    </location>
</feature>
<feature type="DNA-binding region" description="H-T-H motif" evidence="2">
    <location>
        <begin position="194"/>
        <end position="212" status="greater than"/>
    </location>
</feature>
<feature type="binding site" evidence="1">
    <location>
        <position position="10"/>
    </location>
    <ligand>
        <name>Ca(2+)</name>
        <dbReference type="ChEBI" id="CHEBI:29108"/>
    </ligand>
</feature>
<feature type="binding site" evidence="1">
    <location>
        <position position="11"/>
    </location>
    <ligand>
        <name>Ca(2+)</name>
        <dbReference type="ChEBI" id="CHEBI:29108"/>
    </ligand>
</feature>
<feature type="binding site" evidence="1">
    <location>
        <position position="56"/>
    </location>
    <ligand>
        <name>Ca(2+)</name>
        <dbReference type="ChEBI" id="CHEBI:29108"/>
    </ligand>
</feature>
<feature type="modified residue" description="4-aspartylphosphate" evidence="3">
    <location>
        <position position="56"/>
    </location>
</feature>
<feature type="non-terminal residue">
    <location>
        <position position="212"/>
    </location>
</feature>
<gene>
    <name type="primary">spo0A</name>
</gene>
<proteinExistence type="inferred from homology"/>
<evidence type="ECO:0000250" key="1"/>
<evidence type="ECO:0000255" key="2"/>
<evidence type="ECO:0000255" key="3">
    <source>
        <dbReference type="PROSITE-ProRule" id="PRU00169"/>
    </source>
</evidence>
<evidence type="ECO:0000305" key="4"/>
<sequence length="212" mass="23862">MKKIKVCLVDDNRELIGLLEDYISEQEDMEVIGVAYNGQECLSILKDKNPDVLVLDIIMPHLDGLAVLGQLKEMKKENYPNVIMLTAFGQEDVTKKAVDLGAAYFILKPFDMENLVNHIRQVSGQTSSFMQRSSSSMRSHRDSKPANLDASITSIIHEIGVPAHIKGYLYLREAISMVYKDIELLGSITKVLYPDIAKKYNTTASRVERAIR</sequence>
<reference key="1">
    <citation type="journal article" date="1994" name="Mol. Microbiol.">
        <title>Characterization of spo0A homologues in diverse Bacillus and Clostridium species identifies a probable DNA-binding domain.</title>
        <authorList>
            <person name="Brown D.P."/>
            <person name="Ganova-Raeva L."/>
            <person name="Green B.D."/>
            <person name="Wilkinson S.R."/>
            <person name="Young M."/>
            <person name="Youngman P."/>
        </authorList>
    </citation>
    <scope>NUCLEOTIDE SEQUENCE [GENOMIC DNA]</scope>
    <source>
        <strain>ATCC 35985 / VT1660</strain>
    </source>
</reference>
<name>SP0A_PRIMG</name>
<accession>P52932</accession>
<organism>
    <name type="scientific">Priestia megaterium</name>
    <name type="common">Bacillus megaterium</name>
    <dbReference type="NCBI Taxonomy" id="1404"/>
    <lineage>
        <taxon>Bacteria</taxon>
        <taxon>Bacillati</taxon>
        <taxon>Bacillota</taxon>
        <taxon>Bacilli</taxon>
        <taxon>Bacillales</taxon>
        <taxon>Bacillaceae</taxon>
        <taxon>Priestia</taxon>
    </lineage>
</organism>
<keyword id="KW-0010">Activator</keyword>
<keyword id="KW-0106">Calcium</keyword>
<keyword id="KW-0963">Cytoplasm</keyword>
<keyword id="KW-0238">DNA-binding</keyword>
<keyword id="KW-0479">Metal-binding</keyword>
<keyword id="KW-0597">Phosphoprotein</keyword>
<keyword id="KW-0678">Repressor</keyword>
<keyword id="KW-0749">Sporulation</keyword>
<keyword id="KW-0804">Transcription</keyword>
<keyword id="KW-0805">Transcription regulation</keyword>
<keyword id="KW-0902">Two-component regulatory system</keyword>
<dbReference type="EMBL" id="U09974">
    <property type="protein sequence ID" value="AAA18875.1"/>
    <property type="molecule type" value="Genomic_DNA"/>
</dbReference>
<dbReference type="PIR" id="S60872">
    <property type="entry name" value="S60872"/>
</dbReference>
<dbReference type="SMR" id="P52932"/>
<dbReference type="GO" id="GO:0005737">
    <property type="term" value="C:cytoplasm"/>
    <property type="evidence" value="ECO:0007669"/>
    <property type="project" value="UniProtKB-SubCell"/>
</dbReference>
<dbReference type="GO" id="GO:0005509">
    <property type="term" value="F:calcium ion binding"/>
    <property type="evidence" value="ECO:0007669"/>
    <property type="project" value="InterPro"/>
</dbReference>
<dbReference type="GO" id="GO:0003677">
    <property type="term" value="F:DNA binding"/>
    <property type="evidence" value="ECO:0007669"/>
    <property type="project" value="UniProtKB-KW"/>
</dbReference>
<dbReference type="GO" id="GO:0003700">
    <property type="term" value="F:DNA-binding transcription factor activity"/>
    <property type="evidence" value="ECO:0007669"/>
    <property type="project" value="InterPro"/>
</dbReference>
<dbReference type="GO" id="GO:0051606">
    <property type="term" value="P:detection of stimulus"/>
    <property type="evidence" value="ECO:0007669"/>
    <property type="project" value="InterPro"/>
</dbReference>
<dbReference type="GO" id="GO:0000160">
    <property type="term" value="P:phosphorelay signal transduction system"/>
    <property type="evidence" value="ECO:0007669"/>
    <property type="project" value="UniProtKB-KW"/>
</dbReference>
<dbReference type="GO" id="GO:0042173">
    <property type="term" value="P:regulation of sporulation resulting in formation of a cellular spore"/>
    <property type="evidence" value="ECO:0007669"/>
    <property type="project" value="InterPro"/>
</dbReference>
<dbReference type="GO" id="GO:0030435">
    <property type="term" value="P:sporulation resulting in formation of a cellular spore"/>
    <property type="evidence" value="ECO:0007669"/>
    <property type="project" value="UniProtKB-KW"/>
</dbReference>
<dbReference type="CDD" id="cd17561">
    <property type="entry name" value="REC_Spo0A"/>
    <property type="match status" value="1"/>
</dbReference>
<dbReference type="FunFam" id="3.40.50.2300:FF:000154">
    <property type="entry name" value="Stage 0 sporulation protein A"/>
    <property type="match status" value="1"/>
</dbReference>
<dbReference type="Gene3D" id="3.40.50.2300">
    <property type="match status" value="1"/>
</dbReference>
<dbReference type="Gene3D" id="1.10.10.10">
    <property type="entry name" value="Winged helix-like DNA-binding domain superfamily/Winged helix DNA-binding domain"/>
    <property type="match status" value="1"/>
</dbReference>
<dbReference type="InterPro" id="IPR011006">
    <property type="entry name" value="CheY-like_superfamily"/>
</dbReference>
<dbReference type="InterPro" id="IPR016032">
    <property type="entry name" value="Sig_transdc_resp-reg_C-effctor"/>
</dbReference>
<dbReference type="InterPro" id="IPR001789">
    <property type="entry name" value="Sig_transdc_resp-reg_receiver"/>
</dbReference>
<dbReference type="InterPro" id="IPR014879">
    <property type="entry name" value="Spo0A_C"/>
</dbReference>
<dbReference type="InterPro" id="IPR012052">
    <property type="entry name" value="Spore_0_A"/>
</dbReference>
<dbReference type="InterPro" id="IPR052048">
    <property type="entry name" value="ST_Response_Regulator"/>
</dbReference>
<dbReference type="InterPro" id="IPR036388">
    <property type="entry name" value="WH-like_DNA-bd_sf"/>
</dbReference>
<dbReference type="NCBIfam" id="TIGR02875">
    <property type="entry name" value="spore_0_A"/>
    <property type="match status" value="1"/>
</dbReference>
<dbReference type="PANTHER" id="PTHR43228:SF5">
    <property type="entry name" value="STAGE 0 SPORULATION PROTEIN A"/>
    <property type="match status" value="1"/>
</dbReference>
<dbReference type="PANTHER" id="PTHR43228">
    <property type="entry name" value="TWO-COMPONENT RESPONSE REGULATOR"/>
    <property type="match status" value="1"/>
</dbReference>
<dbReference type="Pfam" id="PF00072">
    <property type="entry name" value="Response_reg"/>
    <property type="match status" value="1"/>
</dbReference>
<dbReference type="Pfam" id="PF08769">
    <property type="entry name" value="Spo0A_C"/>
    <property type="match status" value="1"/>
</dbReference>
<dbReference type="SMART" id="SM00448">
    <property type="entry name" value="REC"/>
    <property type="match status" value="1"/>
</dbReference>
<dbReference type="SUPFAM" id="SSF46894">
    <property type="entry name" value="C-terminal effector domain of the bipartite response regulators"/>
    <property type="match status" value="1"/>
</dbReference>
<dbReference type="SUPFAM" id="SSF52172">
    <property type="entry name" value="CheY-like"/>
    <property type="match status" value="1"/>
</dbReference>
<dbReference type="PROSITE" id="PS50110">
    <property type="entry name" value="RESPONSE_REGULATORY"/>
    <property type="match status" value="1"/>
</dbReference>
<protein>
    <recommendedName>
        <fullName>Stage 0 sporulation protein A</fullName>
    </recommendedName>
</protein>